<proteinExistence type="inferred from homology"/>
<feature type="signal peptide" evidence="2">
    <location>
        <begin position="1"/>
        <end position="23"/>
    </location>
</feature>
<feature type="propeptide" id="PRO_0000045235" evidence="1">
    <location>
        <begin position="24"/>
        <end position="60"/>
    </location>
</feature>
<feature type="chain" id="PRO_0000045236" description="Thermonuclease">
    <location>
        <begin position="61"/>
        <end position="228"/>
    </location>
</feature>
<feature type="active site" evidence="1">
    <location>
        <position position="114"/>
    </location>
</feature>
<feature type="active site" evidence="1">
    <location>
        <position position="122"/>
    </location>
</feature>
<feature type="active site" evidence="1">
    <location>
        <position position="166"/>
    </location>
</feature>
<feature type="binding site" evidence="3">
    <location>
        <position position="100"/>
    </location>
    <ligand>
        <name>Ca(2+)</name>
        <dbReference type="ChEBI" id="CHEBI:29108"/>
    </ligand>
</feature>
<feature type="binding site" evidence="3">
    <location>
        <position position="119"/>
    </location>
    <ligand>
        <name>Ca(2+)</name>
        <dbReference type="ChEBI" id="CHEBI:29108"/>
    </ligand>
</feature>
<feature type="binding site" evidence="3">
    <location>
        <position position="120"/>
    </location>
    <ligand>
        <name>Ca(2+)</name>
        <dbReference type="ChEBI" id="CHEBI:29108"/>
    </ligand>
</feature>
<comment type="function">
    <text evidence="1">Enzyme that catalyzes the hydrolysis of both DNA and RNA at the 5' position of the phosphodiester bond.</text>
</comment>
<comment type="catalytic activity">
    <reaction evidence="4 5">
        <text>Endonucleolytic cleavage to nucleoside 3'-phosphates and 3'-phosphooligonucleotide end-products.</text>
        <dbReference type="EC" id="3.1.31.1"/>
    </reaction>
</comment>
<comment type="cofactor">
    <cofactor evidence="1">
        <name>Ca(2+)</name>
        <dbReference type="ChEBI" id="CHEBI:29108"/>
    </cofactor>
    <text evidence="1">Binds 1 Ca(2+) ion per subunit.</text>
</comment>
<comment type="subcellular location">
    <subcellularLocation>
        <location evidence="1">Secreted</location>
    </subcellularLocation>
</comment>
<comment type="similarity">
    <text evidence="3">Belongs to the thermonuclease family.</text>
</comment>
<keyword id="KW-0106">Calcium</keyword>
<keyword id="KW-0255">Endonuclease</keyword>
<keyword id="KW-0378">Hydrolase</keyword>
<keyword id="KW-0479">Metal-binding</keyword>
<keyword id="KW-0540">Nuclease</keyword>
<keyword id="KW-0964">Secreted</keyword>
<keyword id="KW-0732">Signal</keyword>
<keyword id="KW-0865">Zymogen</keyword>
<evidence type="ECO:0000250" key="1"/>
<evidence type="ECO:0000255" key="2"/>
<evidence type="ECO:0000255" key="3">
    <source>
        <dbReference type="PROSITE-ProRule" id="PRU00272"/>
    </source>
</evidence>
<evidence type="ECO:0000255" key="4">
    <source>
        <dbReference type="PROSITE-ProRule" id="PRU10048"/>
    </source>
</evidence>
<evidence type="ECO:0000255" key="5">
    <source>
        <dbReference type="PROSITE-ProRule" id="PRU10049"/>
    </source>
</evidence>
<gene>
    <name type="primary">nuc</name>
    <name type="ordered locus">SAS0756</name>
</gene>
<sequence>MTEYLLSAGICMAIVSILLIGMAISNVSKGQYAKRFFFFATSCLVLTLVVVSSLSSSANASQTDNGVNRSGSEHPTVYSATSTKKLHKEPATLIKAIDGDTVKLMYKGQPMTFRLLLVDTPETKHPKKGVEKYGPEASAFTKKMVENAKKIEVEFDKGQRTDKYGRGLAYIYADGKMVNEALVRQGLAKVAYVYKPNNTHEQLLRKSEAQAKKEKLNIWSEDNADSGQ</sequence>
<dbReference type="EC" id="3.1.31.1"/>
<dbReference type="EMBL" id="BX571857">
    <property type="protein sequence ID" value="CAG42530.1"/>
    <property type="molecule type" value="Genomic_DNA"/>
</dbReference>
<dbReference type="RefSeq" id="WP_001793574.1">
    <property type="nucleotide sequence ID" value="NC_002953.3"/>
</dbReference>
<dbReference type="BMRB" id="Q6GB41"/>
<dbReference type="SMR" id="Q6GB41"/>
<dbReference type="KEGG" id="sas:SAS0756"/>
<dbReference type="HOGENOM" id="CLU_046484_5_2_9"/>
<dbReference type="GO" id="GO:0005576">
    <property type="term" value="C:extracellular region"/>
    <property type="evidence" value="ECO:0007669"/>
    <property type="project" value="UniProtKB-SubCell"/>
</dbReference>
<dbReference type="GO" id="GO:0016894">
    <property type="term" value="F:endonuclease activity, active with either ribo- or deoxyribonucleic acids and producing 3'-phosphomonoesters"/>
    <property type="evidence" value="ECO:0007669"/>
    <property type="project" value="UniProtKB-EC"/>
</dbReference>
<dbReference type="GO" id="GO:0046872">
    <property type="term" value="F:metal ion binding"/>
    <property type="evidence" value="ECO:0007669"/>
    <property type="project" value="UniProtKB-KW"/>
</dbReference>
<dbReference type="GO" id="GO:0003676">
    <property type="term" value="F:nucleic acid binding"/>
    <property type="evidence" value="ECO:0007669"/>
    <property type="project" value="InterPro"/>
</dbReference>
<dbReference type="CDD" id="cd00175">
    <property type="entry name" value="SNc"/>
    <property type="match status" value="1"/>
</dbReference>
<dbReference type="FunFam" id="2.40.50.90:FF:000025">
    <property type="entry name" value="Thermonuclease"/>
    <property type="match status" value="1"/>
</dbReference>
<dbReference type="Gene3D" id="2.40.50.90">
    <property type="match status" value="1"/>
</dbReference>
<dbReference type="InterPro" id="IPR035437">
    <property type="entry name" value="SNase_OB-fold_sf"/>
</dbReference>
<dbReference type="InterPro" id="IPR016071">
    <property type="entry name" value="Staphylococal_nuclease_OB-fold"/>
</dbReference>
<dbReference type="InterPro" id="IPR002071">
    <property type="entry name" value="Thermonucl_AS"/>
</dbReference>
<dbReference type="PANTHER" id="PTHR12302">
    <property type="entry name" value="EBNA2 BINDING PROTEIN P100"/>
    <property type="match status" value="1"/>
</dbReference>
<dbReference type="PANTHER" id="PTHR12302:SF3">
    <property type="entry name" value="SERINE_THREONINE-PROTEIN KINASE 31"/>
    <property type="match status" value="1"/>
</dbReference>
<dbReference type="Pfam" id="PF00565">
    <property type="entry name" value="SNase"/>
    <property type="match status" value="1"/>
</dbReference>
<dbReference type="SMART" id="SM00318">
    <property type="entry name" value="SNc"/>
    <property type="match status" value="1"/>
</dbReference>
<dbReference type="SUPFAM" id="SSF50199">
    <property type="entry name" value="Staphylococcal nuclease"/>
    <property type="match status" value="1"/>
</dbReference>
<dbReference type="PROSITE" id="PS01123">
    <property type="entry name" value="TNASE_1"/>
    <property type="match status" value="1"/>
</dbReference>
<dbReference type="PROSITE" id="PS01284">
    <property type="entry name" value="TNASE_2"/>
    <property type="match status" value="1"/>
</dbReference>
<dbReference type="PROSITE" id="PS50830">
    <property type="entry name" value="TNASE_3"/>
    <property type="match status" value="1"/>
</dbReference>
<reference key="1">
    <citation type="journal article" date="2004" name="Proc. Natl. Acad. Sci. U.S.A.">
        <title>Complete genomes of two clinical Staphylococcus aureus strains: evidence for the rapid evolution of virulence and drug resistance.</title>
        <authorList>
            <person name="Holden M.T.G."/>
            <person name="Feil E.J."/>
            <person name="Lindsay J.A."/>
            <person name="Peacock S.J."/>
            <person name="Day N.P.J."/>
            <person name="Enright M.C."/>
            <person name="Foster T.J."/>
            <person name="Moore C.E."/>
            <person name="Hurst L."/>
            <person name="Atkin R."/>
            <person name="Barron A."/>
            <person name="Bason N."/>
            <person name="Bentley S.D."/>
            <person name="Chillingworth C."/>
            <person name="Chillingworth T."/>
            <person name="Churcher C."/>
            <person name="Clark L."/>
            <person name="Corton C."/>
            <person name="Cronin A."/>
            <person name="Doggett J."/>
            <person name="Dowd L."/>
            <person name="Feltwell T."/>
            <person name="Hance Z."/>
            <person name="Harris B."/>
            <person name="Hauser H."/>
            <person name="Holroyd S."/>
            <person name="Jagels K."/>
            <person name="James K.D."/>
            <person name="Lennard N."/>
            <person name="Line A."/>
            <person name="Mayes R."/>
            <person name="Moule S."/>
            <person name="Mungall K."/>
            <person name="Ormond D."/>
            <person name="Quail M.A."/>
            <person name="Rabbinowitsch E."/>
            <person name="Rutherford K.M."/>
            <person name="Sanders M."/>
            <person name="Sharp S."/>
            <person name="Simmonds M."/>
            <person name="Stevens K."/>
            <person name="Whitehead S."/>
            <person name="Barrell B.G."/>
            <person name="Spratt B.G."/>
            <person name="Parkhill J."/>
        </authorList>
    </citation>
    <scope>NUCLEOTIDE SEQUENCE [LARGE SCALE GENOMIC DNA]</scope>
    <source>
        <strain>MSSA476</strain>
    </source>
</reference>
<protein>
    <recommendedName>
        <fullName>Thermonuclease</fullName>
        <shortName>TNase</shortName>
        <ecNumber>3.1.31.1</ecNumber>
    </recommendedName>
    <alternativeName>
        <fullName>Micrococcal nuclease</fullName>
    </alternativeName>
    <alternativeName>
        <fullName>Staphylococcal nuclease</fullName>
    </alternativeName>
</protein>
<accession>Q6GB41</accession>
<organism>
    <name type="scientific">Staphylococcus aureus (strain MSSA476)</name>
    <dbReference type="NCBI Taxonomy" id="282459"/>
    <lineage>
        <taxon>Bacteria</taxon>
        <taxon>Bacillati</taxon>
        <taxon>Bacillota</taxon>
        <taxon>Bacilli</taxon>
        <taxon>Bacillales</taxon>
        <taxon>Staphylococcaceae</taxon>
        <taxon>Staphylococcus</taxon>
    </lineage>
</organism>
<name>NUC_STAAS</name>